<proteinExistence type="inferred from homology"/>
<feature type="chain" id="PRO_0000345651" description="Cell division protein ZapA">
    <location>
        <begin position="1"/>
        <end position="109"/>
    </location>
</feature>
<feature type="coiled-coil region" evidence="1">
    <location>
        <begin position="21"/>
        <end position="99"/>
    </location>
</feature>
<protein>
    <recommendedName>
        <fullName evidence="1">Cell division protein ZapA</fullName>
    </recommendedName>
    <alternativeName>
        <fullName evidence="1">Z ring-associated protein ZapA</fullName>
    </alternativeName>
</protein>
<organism>
    <name type="scientific">Klebsiella pneumoniae subsp. pneumoniae (strain ATCC 700721 / MGH 78578)</name>
    <dbReference type="NCBI Taxonomy" id="272620"/>
    <lineage>
        <taxon>Bacteria</taxon>
        <taxon>Pseudomonadati</taxon>
        <taxon>Pseudomonadota</taxon>
        <taxon>Gammaproteobacteria</taxon>
        <taxon>Enterobacterales</taxon>
        <taxon>Enterobacteriaceae</taxon>
        <taxon>Klebsiella/Raoultella group</taxon>
        <taxon>Klebsiella</taxon>
        <taxon>Klebsiella pneumoniae complex</taxon>
    </lineage>
</organism>
<keyword id="KW-0131">Cell cycle</keyword>
<keyword id="KW-0132">Cell division</keyword>
<keyword id="KW-0175">Coiled coil</keyword>
<keyword id="KW-0963">Cytoplasm</keyword>
<keyword id="KW-0717">Septation</keyword>
<reference key="1">
    <citation type="submission" date="2006-09" db="EMBL/GenBank/DDBJ databases">
        <authorList>
            <consortium name="The Klebsiella pneumonia Genome Sequencing Project"/>
            <person name="McClelland M."/>
            <person name="Sanderson E.K."/>
            <person name="Spieth J."/>
            <person name="Clifton W.S."/>
            <person name="Latreille P."/>
            <person name="Sabo A."/>
            <person name="Pepin K."/>
            <person name="Bhonagiri V."/>
            <person name="Porwollik S."/>
            <person name="Ali J."/>
            <person name="Wilson R.K."/>
        </authorList>
    </citation>
    <scope>NUCLEOTIDE SEQUENCE [LARGE SCALE GENOMIC DNA]</scope>
    <source>
        <strain>ATCC 700721 / MGH 78578</strain>
    </source>
</reference>
<sequence>MSAQPVDLQIFGRSLRVNCPPEQRDALNQAAEDLNQRLQDLKERTRVTNTEQLVFIAALNISYELTQEKAKTRDYASSMEQRIRMLQQTIEQALLEQGRISEKPGSKFE</sequence>
<comment type="function">
    <text evidence="1">Activator of cell division through the inhibition of FtsZ GTPase activity, therefore promoting FtsZ assembly into bundles of protofilaments necessary for the formation of the division Z ring. It is recruited early at mid-cell but it is not essential for cell division.</text>
</comment>
<comment type="subunit">
    <text evidence="1">Homodimer. Interacts with FtsZ.</text>
</comment>
<comment type="subcellular location">
    <subcellularLocation>
        <location evidence="1">Cytoplasm</location>
    </subcellularLocation>
    <text evidence="1">Localizes at mid-cell.</text>
</comment>
<comment type="similarity">
    <text evidence="1">Belongs to the ZapA family. Type 1 subfamily.</text>
</comment>
<accession>A6TDS2</accession>
<gene>
    <name evidence="1" type="primary">zapA</name>
    <name type="ordered locus">KPN78578_32820</name>
    <name type="ORF">KPN_03346</name>
</gene>
<evidence type="ECO:0000255" key="1">
    <source>
        <dbReference type="HAMAP-Rule" id="MF_02012"/>
    </source>
</evidence>
<name>ZAPA_KLEP7</name>
<dbReference type="EMBL" id="CP000647">
    <property type="protein sequence ID" value="ABR78743.1"/>
    <property type="molecule type" value="Genomic_DNA"/>
</dbReference>
<dbReference type="RefSeq" id="WP_002916488.1">
    <property type="nucleotide sequence ID" value="NC_009648.1"/>
</dbReference>
<dbReference type="SMR" id="A6TDS2"/>
<dbReference type="STRING" id="272620.KPN_03346"/>
<dbReference type="jPOST" id="A6TDS2"/>
<dbReference type="PaxDb" id="272620-KPN_03346"/>
<dbReference type="EnsemblBacteria" id="ABR78743">
    <property type="protein sequence ID" value="ABR78743"/>
    <property type="gene ID" value="KPN_03346"/>
</dbReference>
<dbReference type="KEGG" id="kpn:KPN_03346"/>
<dbReference type="HOGENOM" id="CLU_116623_3_0_6"/>
<dbReference type="Proteomes" id="UP000000265">
    <property type="component" value="Chromosome"/>
</dbReference>
<dbReference type="GO" id="GO:0032153">
    <property type="term" value="C:cell division site"/>
    <property type="evidence" value="ECO:0007669"/>
    <property type="project" value="TreeGrafter"/>
</dbReference>
<dbReference type="GO" id="GO:0030428">
    <property type="term" value="C:cell septum"/>
    <property type="evidence" value="ECO:0007669"/>
    <property type="project" value="TreeGrafter"/>
</dbReference>
<dbReference type="GO" id="GO:0005829">
    <property type="term" value="C:cytosol"/>
    <property type="evidence" value="ECO:0007669"/>
    <property type="project" value="TreeGrafter"/>
</dbReference>
<dbReference type="GO" id="GO:0005886">
    <property type="term" value="C:plasma membrane"/>
    <property type="evidence" value="ECO:0007669"/>
    <property type="project" value="UniProtKB-UniRule"/>
</dbReference>
<dbReference type="GO" id="GO:0000917">
    <property type="term" value="P:division septum assembly"/>
    <property type="evidence" value="ECO:0007669"/>
    <property type="project" value="UniProtKB-KW"/>
</dbReference>
<dbReference type="GO" id="GO:0043093">
    <property type="term" value="P:FtsZ-dependent cytokinesis"/>
    <property type="evidence" value="ECO:0007669"/>
    <property type="project" value="TreeGrafter"/>
</dbReference>
<dbReference type="GO" id="GO:0000921">
    <property type="term" value="P:septin ring assembly"/>
    <property type="evidence" value="ECO:0007669"/>
    <property type="project" value="TreeGrafter"/>
</dbReference>
<dbReference type="FunFam" id="1.20.5.50:FF:000001">
    <property type="entry name" value="Cell division protein ZapA"/>
    <property type="match status" value="1"/>
</dbReference>
<dbReference type="FunFam" id="3.30.160.880:FF:000001">
    <property type="entry name" value="Cell division protein ZapA"/>
    <property type="match status" value="1"/>
</dbReference>
<dbReference type="Gene3D" id="1.20.5.50">
    <property type="match status" value="1"/>
</dbReference>
<dbReference type="Gene3D" id="3.30.160.880">
    <property type="entry name" value="Cell division protein ZapA protomer, N-terminal domain"/>
    <property type="match status" value="1"/>
</dbReference>
<dbReference type="HAMAP" id="MF_02012">
    <property type="entry name" value="ZapA_type1"/>
    <property type="match status" value="1"/>
</dbReference>
<dbReference type="InterPro" id="IPR007838">
    <property type="entry name" value="Cell_div_ZapA-like"/>
</dbReference>
<dbReference type="InterPro" id="IPR036192">
    <property type="entry name" value="Cell_div_ZapA-like_sf"/>
</dbReference>
<dbReference type="InterPro" id="IPR023771">
    <property type="entry name" value="Cell_div_ZapA_eubact"/>
</dbReference>
<dbReference type="InterPro" id="IPR042233">
    <property type="entry name" value="Cell_div_ZapA_N"/>
</dbReference>
<dbReference type="NCBIfam" id="NF008209">
    <property type="entry name" value="PRK10972.1"/>
    <property type="match status" value="1"/>
</dbReference>
<dbReference type="PANTHER" id="PTHR34981">
    <property type="entry name" value="CELL DIVISION PROTEIN ZAPA"/>
    <property type="match status" value="1"/>
</dbReference>
<dbReference type="PANTHER" id="PTHR34981:SF1">
    <property type="entry name" value="CELL DIVISION PROTEIN ZAPA"/>
    <property type="match status" value="1"/>
</dbReference>
<dbReference type="Pfam" id="PF05164">
    <property type="entry name" value="ZapA"/>
    <property type="match status" value="1"/>
</dbReference>
<dbReference type="SUPFAM" id="SSF102829">
    <property type="entry name" value="Cell division protein ZapA-like"/>
    <property type="match status" value="1"/>
</dbReference>